<comment type="function">
    <text evidence="1">One of the early assembly proteins it binds 23S rRNA. One of the proteins that surrounds the polypeptide exit tunnel on the outside of the ribosome. Forms the main docking site for trigger factor binding to the ribosome.</text>
</comment>
<comment type="subunit">
    <text evidence="1">Part of the 50S ribosomal subunit. Contacts protein L29, and trigger factor when it is bound to the ribosome.</text>
</comment>
<comment type="similarity">
    <text evidence="1">Belongs to the universal ribosomal protein uL23 family.</text>
</comment>
<keyword id="KW-0687">Ribonucleoprotein</keyword>
<keyword id="KW-0689">Ribosomal protein</keyword>
<keyword id="KW-0694">RNA-binding</keyword>
<keyword id="KW-0699">rRNA-binding</keyword>
<proteinExistence type="inferred from homology"/>
<gene>
    <name evidence="1" type="primary">rplW</name>
    <name type="ordered locus">SaurJH9_2275</name>
</gene>
<evidence type="ECO:0000255" key="1">
    <source>
        <dbReference type="HAMAP-Rule" id="MF_01369"/>
    </source>
</evidence>
<evidence type="ECO:0000305" key="2"/>
<feature type="chain" id="PRO_1000087234" description="Large ribosomal subunit protein uL23">
    <location>
        <begin position="1"/>
        <end position="91"/>
    </location>
</feature>
<accession>A5IV32</accession>
<name>RL23_STAA9</name>
<organism>
    <name type="scientific">Staphylococcus aureus (strain JH9)</name>
    <dbReference type="NCBI Taxonomy" id="359786"/>
    <lineage>
        <taxon>Bacteria</taxon>
        <taxon>Bacillati</taxon>
        <taxon>Bacillota</taxon>
        <taxon>Bacilli</taxon>
        <taxon>Bacillales</taxon>
        <taxon>Staphylococcaceae</taxon>
        <taxon>Staphylococcus</taxon>
    </lineage>
</organism>
<dbReference type="EMBL" id="CP000703">
    <property type="protein sequence ID" value="ABQ50055.1"/>
    <property type="molecule type" value="Genomic_DNA"/>
</dbReference>
<dbReference type="RefSeq" id="WP_000388082.1">
    <property type="nucleotide sequence ID" value="NC_009487.1"/>
</dbReference>
<dbReference type="SMR" id="A5IV32"/>
<dbReference type="KEGG" id="saj:SaurJH9_2275"/>
<dbReference type="HOGENOM" id="CLU_037562_3_2_9"/>
<dbReference type="GO" id="GO:1990904">
    <property type="term" value="C:ribonucleoprotein complex"/>
    <property type="evidence" value="ECO:0007669"/>
    <property type="project" value="UniProtKB-KW"/>
</dbReference>
<dbReference type="GO" id="GO:0005840">
    <property type="term" value="C:ribosome"/>
    <property type="evidence" value="ECO:0007669"/>
    <property type="project" value="UniProtKB-KW"/>
</dbReference>
<dbReference type="GO" id="GO:0019843">
    <property type="term" value="F:rRNA binding"/>
    <property type="evidence" value="ECO:0007669"/>
    <property type="project" value="UniProtKB-UniRule"/>
</dbReference>
<dbReference type="GO" id="GO:0003735">
    <property type="term" value="F:structural constituent of ribosome"/>
    <property type="evidence" value="ECO:0007669"/>
    <property type="project" value="InterPro"/>
</dbReference>
<dbReference type="GO" id="GO:0006412">
    <property type="term" value="P:translation"/>
    <property type="evidence" value="ECO:0007669"/>
    <property type="project" value="UniProtKB-UniRule"/>
</dbReference>
<dbReference type="FunFam" id="3.30.70.330:FF:000001">
    <property type="entry name" value="50S ribosomal protein L23"/>
    <property type="match status" value="1"/>
</dbReference>
<dbReference type="Gene3D" id="3.30.70.330">
    <property type="match status" value="1"/>
</dbReference>
<dbReference type="HAMAP" id="MF_01369_B">
    <property type="entry name" value="Ribosomal_uL23_B"/>
    <property type="match status" value="1"/>
</dbReference>
<dbReference type="InterPro" id="IPR012677">
    <property type="entry name" value="Nucleotide-bd_a/b_plait_sf"/>
</dbReference>
<dbReference type="InterPro" id="IPR013025">
    <property type="entry name" value="Ribosomal_uL23-like"/>
</dbReference>
<dbReference type="InterPro" id="IPR012678">
    <property type="entry name" value="Ribosomal_uL23/eL15/eS24_sf"/>
</dbReference>
<dbReference type="NCBIfam" id="NF004363">
    <property type="entry name" value="PRK05738.2-4"/>
    <property type="match status" value="1"/>
</dbReference>
<dbReference type="PANTHER" id="PTHR11620">
    <property type="entry name" value="60S RIBOSOMAL PROTEIN L23A"/>
    <property type="match status" value="1"/>
</dbReference>
<dbReference type="Pfam" id="PF00276">
    <property type="entry name" value="Ribosomal_L23"/>
    <property type="match status" value="1"/>
</dbReference>
<dbReference type="SUPFAM" id="SSF54189">
    <property type="entry name" value="Ribosomal proteins S24e, L23 and L15e"/>
    <property type="match status" value="1"/>
</dbReference>
<reference key="1">
    <citation type="submission" date="2007-05" db="EMBL/GenBank/DDBJ databases">
        <title>Complete sequence of chromosome of Staphylococcus aureus subsp. aureus JH9.</title>
        <authorList>
            <consortium name="US DOE Joint Genome Institute"/>
            <person name="Copeland A."/>
            <person name="Lucas S."/>
            <person name="Lapidus A."/>
            <person name="Barry K."/>
            <person name="Detter J.C."/>
            <person name="Glavina del Rio T."/>
            <person name="Hammon N."/>
            <person name="Israni S."/>
            <person name="Pitluck S."/>
            <person name="Chain P."/>
            <person name="Malfatti S."/>
            <person name="Shin M."/>
            <person name="Vergez L."/>
            <person name="Schmutz J."/>
            <person name="Larimer F."/>
            <person name="Land M."/>
            <person name="Hauser L."/>
            <person name="Kyrpides N."/>
            <person name="Kim E."/>
            <person name="Tomasz A."/>
            <person name="Richardson P."/>
        </authorList>
    </citation>
    <scope>NUCLEOTIDE SEQUENCE [LARGE SCALE GENOMIC DNA]</scope>
    <source>
        <strain>JH9</strain>
    </source>
</reference>
<protein>
    <recommendedName>
        <fullName evidence="1">Large ribosomal subunit protein uL23</fullName>
    </recommendedName>
    <alternativeName>
        <fullName evidence="2">50S ribosomal protein L23</fullName>
    </alternativeName>
</protein>
<sequence>MEARDILKRPVITEKSSEAMAEDKYTFDVDTRVNKTQVKMAVEEIFNVKVASVNIMNYKPKKKRMGRYQGYTNKRRKAIVTLKEGSIDLFN</sequence>